<protein>
    <recommendedName>
        <fullName evidence="1">Succinate--CoA ligase [ADP-forming] subunit beta</fullName>
        <ecNumber evidence="1">6.2.1.5</ecNumber>
    </recommendedName>
    <alternativeName>
        <fullName evidence="1">Succinyl-CoA synthetase subunit beta</fullName>
        <shortName evidence="1">SCS-beta</shortName>
    </alternativeName>
</protein>
<accession>A6QGE5</accession>
<keyword id="KW-0067">ATP-binding</keyword>
<keyword id="KW-0436">Ligase</keyword>
<keyword id="KW-0460">Magnesium</keyword>
<keyword id="KW-0479">Metal-binding</keyword>
<keyword id="KW-0547">Nucleotide-binding</keyword>
<keyword id="KW-0816">Tricarboxylic acid cycle</keyword>
<feature type="chain" id="PRO_1000082247" description="Succinate--CoA ligase [ADP-forming] subunit beta">
    <location>
        <begin position="1"/>
        <end position="388"/>
    </location>
</feature>
<feature type="domain" description="ATP-grasp" evidence="1">
    <location>
        <begin position="9"/>
        <end position="244"/>
    </location>
</feature>
<feature type="binding site" evidence="1">
    <location>
        <position position="46"/>
    </location>
    <ligand>
        <name>ATP</name>
        <dbReference type="ChEBI" id="CHEBI:30616"/>
    </ligand>
</feature>
<feature type="binding site" evidence="1">
    <location>
        <begin position="53"/>
        <end position="55"/>
    </location>
    <ligand>
        <name>ATP</name>
        <dbReference type="ChEBI" id="CHEBI:30616"/>
    </ligand>
</feature>
<feature type="binding site" evidence="1">
    <location>
        <position position="99"/>
    </location>
    <ligand>
        <name>ATP</name>
        <dbReference type="ChEBI" id="CHEBI:30616"/>
    </ligand>
</feature>
<feature type="binding site" evidence="1">
    <location>
        <position position="102"/>
    </location>
    <ligand>
        <name>ATP</name>
        <dbReference type="ChEBI" id="CHEBI:30616"/>
    </ligand>
</feature>
<feature type="binding site" evidence="1">
    <location>
        <position position="107"/>
    </location>
    <ligand>
        <name>ATP</name>
        <dbReference type="ChEBI" id="CHEBI:30616"/>
    </ligand>
</feature>
<feature type="binding site" evidence="1">
    <location>
        <position position="199"/>
    </location>
    <ligand>
        <name>Mg(2+)</name>
        <dbReference type="ChEBI" id="CHEBI:18420"/>
    </ligand>
</feature>
<feature type="binding site" evidence="1">
    <location>
        <position position="213"/>
    </location>
    <ligand>
        <name>Mg(2+)</name>
        <dbReference type="ChEBI" id="CHEBI:18420"/>
    </ligand>
</feature>
<feature type="binding site" evidence="1">
    <location>
        <position position="264"/>
    </location>
    <ligand>
        <name>substrate</name>
        <note>ligand shared with subunit alpha</note>
    </ligand>
</feature>
<feature type="binding site" evidence="1">
    <location>
        <begin position="321"/>
        <end position="323"/>
    </location>
    <ligand>
        <name>substrate</name>
        <note>ligand shared with subunit alpha</note>
    </ligand>
</feature>
<organism>
    <name type="scientific">Staphylococcus aureus (strain Newman)</name>
    <dbReference type="NCBI Taxonomy" id="426430"/>
    <lineage>
        <taxon>Bacteria</taxon>
        <taxon>Bacillati</taxon>
        <taxon>Bacillota</taxon>
        <taxon>Bacilli</taxon>
        <taxon>Bacillales</taxon>
        <taxon>Staphylococcaceae</taxon>
        <taxon>Staphylococcus</taxon>
    </lineage>
</organism>
<dbReference type="EC" id="6.2.1.5" evidence="1"/>
<dbReference type="EMBL" id="AP009351">
    <property type="protein sequence ID" value="BAF67427.1"/>
    <property type="molecule type" value="Genomic_DNA"/>
</dbReference>
<dbReference type="RefSeq" id="WP_001020801.1">
    <property type="nucleotide sequence ID" value="NZ_JBBIAE010000001.1"/>
</dbReference>
<dbReference type="SMR" id="A6QGE5"/>
<dbReference type="KEGG" id="sae:NWMN_1155"/>
<dbReference type="HOGENOM" id="CLU_037430_0_2_9"/>
<dbReference type="UniPathway" id="UPA00223">
    <property type="reaction ID" value="UER00999"/>
</dbReference>
<dbReference type="Proteomes" id="UP000006386">
    <property type="component" value="Chromosome"/>
</dbReference>
<dbReference type="GO" id="GO:0005829">
    <property type="term" value="C:cytosol"/>
    <property type="evidence" value="ECO:0007669"/>
    <property type="project" value="TreeGrafter"/>
</dbReference>
<dbReference type="GO" id="GO:0042709">
    <property type="term" value="C:succinate-CoA ligase complex"/>
    <property type="evidence" value="ECO:0007669"/>
    <property type="project" value="TreeGrafter"/>
</dbReference>
<dbReference type="GO" id="GO:0005524">
    <property type="term" value="F:ATP binding"/>
    <property type="evidence" value="ECO:0007669"/>
    <property type="project" value="UniProtKB-UniRule"/>
</dbReference>
<dbReference type="GO" id="GO:0000287">
    <property type="term" value="F:magnesium ion binding"/>
    <property type="evidence" value="ECO:0007669"/>
    <property type="project" value="UniProtKB-UniRule"/>
</dbReference>
<dbReference type="GO" id="GO:0004775">
    <property type="term" value="F:succinate-CoA ligase (ADP-forming) activity"/>
    <property type="evidence" value="ECO:0007669"/>
    <property type="project" value="UniProtKB-UniRule"/>
</dbReference>
<dbReference type="GO" id="GO:0004776">
    <property type="term" value="F:succinate-CoA ligase (GDP-forming) activity"/>
    <property type="evidence" value="ECO:0007669"/>
    <property type="project" value="RHEA"/>
</dbReference>
<dbReference type="GO" id="GO:0006104">
    <property type="term" value="P:succinyl-CoA metabolic process"/>
    <property type="evidence" value="ECO:0007669"/>
    <property type="project" value="TreeGrafter"/>
</dbReference>
<dbReference type="GO" id="GO:0006099">
    <property type="term" value="P:tricarboxylic acid cycle"/>
    <property type="evidence" value="ECO:0007669"/>
    <property type="project" value="UniProtKB-UniRule"/>
</dbReference>
<dbReference type="FunFam" id="3.30.1490.20:FF:000002">
    <property type="entry name" value="Succinate--CoA ligase [ADP-forming] subunit beta"/>
    <property type="match status" value="1"/>
</dbReference>
<dbReference type="FunFam" id="3.30.470.20:FF:000002">
    <property type="entry name" value="Succinate--CoA ligase [ADP-forming] subunit beta"/>
    <property type="match status" value="1"/>
</dbReference>
<dbReference type="FunFam" id="3.40.50.261:FF:000001">
    <property type="entry name" value="Succinate--CoA ligase [ADP-forming] subunit beta"/>
    <property type="match status" value="1"/>
</dbReference>
<dbReference type="Gene3D" id="3.30.1490.20">
    <property type="entry name" value="ATP-grasp fold, A domain"/>
    <property type="match status" value="1"/>
</dbReference>
<dbReference type="Gene3D" id="3.30.470.20">
    <property type="entry name" value="ATP-grasp fold, B domain"/>
    <property type="match status" value="1"/>
</dbReference>
<dbReference type="Gene3D" id="3.40.50.261">
    <property type="entry name" value="Succinyl-CoA synthetase domains"/>
    <property type="match status" value="1"/>
</dbReference>
<dbReference type="HAMAP" id="MF_00558">
    <property type="entry name" value="Succ_CoA_beta"/>
    <property type="match status" value="1"/>
</dbReference>
<dbReference type="InterPro" id="IPR011761">
    <property type="entry name" value="ATP-grasp"/>
</dbReference>
<dbReference type="InterPro" id="IPR013650">
    <property type="entry name" value="ATP-grasp_succ-CoA_synth-type"/>
</dbReference>
<dbReference type="InterPro" id="IPR013815">
    <property type="entry name" value="ATP_grasp_subdomain_1"/>
</dbReference>
<dbReference type="InterPro" id="IPR017866">
    <property type="entry name" value="Succ-CoA_synthase_bsu_CS"/>
</dbReference>
<dbReference type="InterPro" id="IPR005811">
    <property type="entry name" value="SUCC_ACL_C"/>
</dbReference>
<dbReference type="InterPro" id="IPR005809">
    <property type="entry name" value="Succ_CoA_ligase-like_bsu"/>
</dbReference>
<dbReference type="InterPro" id="IPR016102">
    <property type="entry name" value="Succinyl-CoA_synth-like"/>
</dbReference>
<dbReference type="NCBIfam" id="NF001913">
    <property type="entry name" value="PRK00696.1"/>
    <property type="match status" value="1"/>
</dbReference>
<dbReference type="NCBIfam" id="TIGR01016">
    <property type="entry name" value="sucCoAbeta"/>
    <property type="match status" value="1"/>
</dbReference>
<dbReference type="PANTHER" id="PTHR11815:SF10">
    <property type="entry name" value="SUCCINATE--COA LIGASE [GDP-FORMING] SUBUNIT BETA, MITOCHONDRIAL"/>
    <property type="match status" value="1"/>
</dbReference>
<dbReference type="PANTHER" id="PTHR11815">
    <property type="entry name" value="SUCCINYL-COA SYNTHETASE BETA CHAIN"/>
    <property type="match status" value="1"/>
</dbReference>
<dbReference type="Pfam" id="PF08442">
    <property type="entry name" value="ATP-grasp_2"/>
    <property type="match status" value="1"/>
</dbReference>
<dbReference type="Pfam" id="PF00549">
    <property type="entry name" value="Ligase_CoA"/>
    <property type="match status" value="1"/>
</dbReference>
<dbReference type="PIRSF" id="PIRSF001554">
    <property type="entry name" value="SucCS_beta"/>
    <property type="match status" value="1"/>
</dbReference>
<dbReference type="SUPFAM" id="SSF56059">
    <property type="entry name" value="Glutathione synthetase ATP-binding domain-like"/>
    <property type="match status" value="1"/>
</dbReference>
<dbReference type="SUPFAM" id="SSF52210">
    <property type="entry name" value="Succinyl-CoA synthetase domains"/>
    <property type="match status" value="1"/>
</dbReference>
<dbReference type="PROSITE" id="PS50975">
    <property type="entry name" value="ATP_GRASP"/>
    <property type="match status" value="1"/>
</dbReference>
<dbReference type="PROSITE" id="PS01217">
    <property type="entry name" value="SUCCINYL_COA_LIG_3"/>
    <property type="match status" value="1"/>
</dbReference>
<reference key="1">
    <citation type="journal article" date="2008" name="J. Bacteriol.">
        <title>Genome sequence of Staphylococcus aureus strain Newman and comparative analysis of staphylococcal genomes: polymorphism and evolution of two major pathogenicity islands.</title>
        <authorList>
            <person name="Baba T."/>
            <person name="Bae T."/>
            <person name="Schneewind O."/>
            <person name="Takeuchi F."/>
            <person name="Hiramatsu K."/>
        </authorList>
    </citation>
    <scope>NUCLEOTIDE SEQUENCE [LARGE SCALE GENOMIC DNA]</scope>
    <source>
        <strain>Newman</strain>
    </source>
</reference>
<sequence length="388" mass="42056">MNIHEYQGKEIFRSMGVAVPEGRVAFTAEEAVEKAKELNSDVYVVKAQIHAGGRGKAGGVKIAKSLSEVETYAKELLGKTLVTHQTGPEGKEIKRLYIEEGCAIQKEYYVGFVIDRATDQVTLMASEEGGTEIEEVAAKTPEKIFKETIDPVIGLSPFQARRIAFNINIPKESVNKAAKFLLALYNVFIEKDCSIVEINPLVTTADGDVLALDAKINFDDNALFRHKDVVELRDLEEEDPKEIEASKHDLSYIALDGDIGCMVNGAGLAMATMDTINHFGGNPANFLDAGGSATREKVTEAFKIILGDENVKGIFVNIFGGIMKCDVIAEGIVEAVKEVDLTLPLVVRLEGTNVELGKKILKDSGLAIEPAATMAEGAQKIVKLVKEA</sequence>
<comment type="function">
    <text evidence="1">Succinyl-CoA synthetase functions in the citric acid cycle (TCA), coupling the hydrolysis of succinyl-CoA to the synthesis of either ATP or GTP and thus represents the only step of substrate-level phosphorylation in the TCA. The beta subunit provides nucleotide specificity of the enzyme and binds the substrate succinate, while the binding sites for coenzyme A and phosphate are found in the alpha subunit.</text>
</comment>
<comment type="catalytic activity">
    <reaction evidence="1">
        <text>succinate + ATP + CoA = succinyl-CoA + ADP + phosphate</text>
        <dbReference type="Rhea" id="RHEA:17661"/>
        <dbReference type="ChEBI" id="CHEBI:30031"/>
        <dbReference type="ChEBI" id="CHEBI:30616"/>
        <dbReference type="ChEBI" id="CHEBI:43474"/>
        <dbReference type="ChEBI" id="CHEBI:57287"/>
        <dbReference type="ChEBI" id="CHEBI:57292"/>
        <dbReference type="ChEBI" id="CHEBI:456216"/>
        <dbReference type="EC" id="6.2.1.5"/>
    </reaction>
    <physiologicalReaction direction="right-to-left" evidence="1">
        <dbReference type="Rhea" id="RHEA:17663"/>
    </physiologicalReaction>
</comment>
<comment type="catalytic activity">
    <reaction evidence="1">
        <text>GTP + succinate + CoA = succinyl-CoA + GDP + phosphate</text>
        <dbReference type="Rhea" id="RHEA:22120"/>
        <dbReference type="ChEBI" id="CHEBI:30031"/>
        <dbReference type="ChEBI" id="CHEBI:37565"/>
        <dbReference type="ChEBI" id="CHEBI:43474"/>
        <dbReference type="ChEBI" id="CHEBI:57287"/>
        <dbReference type="ChEBI" id="CHEBI:57292"/>
        <dbReference type="ChEBI" id="CHEBI:58189"/>
    </reaction>
    <physiologicalReaction direction="right-to-left" evidence="1">
        <dbReference type="Rhea" id="RHEA:22122"/>
    </physiologicalReaction>
</comment>
<comment type="cofactor">
    <cofactor evidence="1">
        <name>Mg(2+)</name>
        <dbReference type="ChEBI" id="CHEBI:18420"/>
    </cofactor>
    <text evidence="1">Binds 1 Mg(2+) ion per subunit.</text>
</comment>
<comment type="pathway">
    <text evidence="1">Carbohydrate metabolism; tricarboxylic acid cycle; succinate from succinyl-CoA (ligase route): step 1/1.</text>
</comment>
<comment type="subunit">
    <text evidence="1">Heterotetramer of two alpha and two beta subunits.</text>
</comment>
<comment type="similarity">
    <text evidence="1">Belongs to the succinate/malate CoA ligase beta subunit family.</text>
</comment>
<name>SUCC_STAAE</name>
<proteinExistence type="inferred from homology"/>
<evidence type="ECO:0000255" key="1">
    <source>
        <dbReference type="HAMAP-Rule" id="MF_00558"/>
    </source>
</evidence>
<gene>
    <name evidence="1" type="primary">sucC</name>
    <name type="ordered locus">NWMN_1155</name>
</gene>